<sequence>MEEELKQQFDEMGVEPADAVLGRCAELAITYNIHDATEFVEQWMAFSLSHLQGEDPAIENLGDFERKVLQLRKDKAGYKATGQKAKSYGSPSVQDTSSLATYGVMEDDPMLDDYVSESAVDSSALHTPKAKKQSDRTANLKGAALFSPASYTPQSAKRKAGLETPSNSVAGKPGDIVDTFGHPKLLAGSSWQSQMEHTVPVTQKLLHNDAPLTIANLGYMNDLLTDRCHNLRVRFNQTGPALVDKKLGQAGAAECIWYPQDRQVLQSAGGLHAVGMIHSEDDGPLDAHSAFMAVLDDDVEDEMDPTLTLNFSRVKSASIFPGQVVLAKGFIPRGKTFMVEEIHTERKLTPATPLQIDRELQFVVASGPFTDSTDLFYEPLHDLLKYLKDHRPDVLVLTGPFLDADHKMVGELAETFDTFFEKMIGGIMESIGSHTAVLVVTSQKDAMALSVYPTPPPALRRTYPNLYMLPDPSLVDLDGFTLGVTSTDVVDHLLSHEFAVNAGERMHRAINHLFHQGSFYPLYPPADEDMAYDSQLALKYAQLKQLPNVLILPSDQRHFIRLVNDCLVINPGRVADKKGGTFARFLVAPSVPGKAANMFNSVACQVQRI</sequence>
<dbReference type="EMBL" id="AE014297">
    <property type="protein sequence ID" value="AAF56680.4"/>
    <property type="molecule type" value="Genomic_DNA"/>
</dbReference>
<dbReference type="EMBL" id="AY060943">
    <property type="protein sequence ID" value="AAL28491.1"/>
    <property type="molecule type" value="mRNA"/>
</dbReference>
<dbReference type="PIR" id="S40962">
    <property type="entry name" value="S40962"/>
</dbReference>
<dbReference type="RefSeq" id="NP_733206.3">
    <property type="nucleotide sequence ID" value="NM_170327.4"/>
</dbReference>
<dbReference type="SMR" id="Q9VB62"/>
<dbReference type="BioGRID" id="68166">
    <property type="interactions" value="19"/>
</dbReference>
<dbReference type="ComplexPortal" id="CPX-2090">
    <property type="entry name" value="DNA polymerase alpha:primase complex"/>
</dbReference>
<dbReference type="FunCoup" id="Q9VB62">
    <property type="interactions" value="1255"/>
</dbReference>
<dbReference type="IntAct" id="Q9VB62">
    <property type="interactions" value="3"/>
</dbReference>
<dbReference type="STRING" id="7227.FBpp0113035"/>
<dbReference type="GlyGen" id="Q9VB62">
    <property type="glycosylation" value="1 site"/>
</dbReference>
<dbReference type="iPTMnet" id="Q9VB62"/>
<dbReference type="PaxDb" id="7227-FBpp0113035"/>
<dbReference type="EnsemblMetazoa" id="FBtr0114543">
    <property type="protein sequence ID" value="FBpp0113035"/>
    <property type="gene ID" value="FBgn0005696"/>
</dbReference>
<dbReference type="GeneID" id="43278"/>
<dbReference type="KEGG" id="dme:Dmel_CG5923"/>
<dbReference type="AGR" id="FB:FBgn0005696"/>
<dbReference type="CTD" id="23649"/>
<dbReference type="FlyBase" id="FBgn0005696">
    <property type="gene designation" value="PolA2"/>
</dbReference>
<dbReference type="VEuPathDB" id="VectorBase:FBgn0005696"/>
<dbReference type="eggNOG" id="KOG1625">
    <property type="taxonomic scope" value="Eukaryota"/>
</dbReference>
<dbReference type="HOGENOM" id="CLU_014923_3_0_1"/>
<dbReference type="InParanoid" id="Q9VB62"/>
<dbReference type="OMA" id="QQFDEMG"/>
<dbReference type="OrthoDB" id="336885at2759"/>
<dbReference type="PhylomeDB" id="Q9VB62"/>
<dbReference type="Reactome" id="R-DME-113501">
    <property type="pathway name" value="Inhibition of replication initiation of damaged DNA by RB1/E2F1"/>
</dbReference>
<dbReference type="Reactome" id="R-DME-68952">
    <property type="pathway name" value="DNA replication initiation"/>
</dbReference>
<dbReference type="Reactome" id="R-DME-68962">
    <property type="pathway name" value="Activation of the pre-replicative complex"/>
</dbReference>
<dbReference type="Reactome" id="R-DME-69091">
    <property type="pathway name" value="Polymerase switching"/>
</dbReference>
<dbReference type="Reactome" id="R-DME-69166">
    <property type="pathway name" value="Removal of the Flap Intermediate"/>
</dbReference>
<dbReference type="Reactome" id="R-DME-69183">
    <property type="pathway name" value="Processive synthesis on the lagging strand"/>
</dbReference>
<dbReference type="BioGRID-ORCS" id="43278">
    <property type="hits" value="0 hits in 3 CRISPR screens"/>
</dbReference>
<dbReference type="GenomeRNAi" id="43278"/>
<dbReference type="PRO" id="PR:Q9VB62"/>
<dbReference type="Proteomes" id="UP000000803">
    <property type="component" value="Chromosome 3R"/>
</dbReference>
<dbReference type="Bgee" id="FBgn0005696">
    <property type="expression patterns" value="Expressed in secondary oocyte and 21 other cell types or tissues"/>
</dbReference>
<dbReference type="ExpressionAtlas" id="Q9VB62">
    <property type="expression patterns" value="baseline and differential"/>
</dbReference>
<dbReference type="GO" id="GO:0005658">
    <property type="term" value="C:alpha DNA polymerase:primase complex"/>
    <property type="evidence" value="ECO:0000314"/>
    <property type="project" value="FlyBase"/>
</dbReference>
<dbReference type="GO" id="GO:0005635">
    <property type="term" value="C:nuclear envelope"/>
    <property type="evidence" value="ECO:0000250"/>
    <property type="project" value="UniProtKB"/>
</dbReference>
<dbReference type="GO" id="GO:0005634">
    <property type="term" value="C:nucleus"/>
    <property type="evidence" value="ECO:0000250"/>
    <property type="project" value="UniProtKB"/>
</dbReference>
<dbReference type="GO" id="GO:0003677">
    <property type="term" value="F:DNA binding"/>
    <property type="evidence" value="ECO:0007669"/>
    <property type="project" value="InterPro"/>
</dbReference>
<dbReference type="GO" id="GO:0006270">
    <property type="term" value="P:DNA replication initiation"/>
    <property type="evidence" value="ECO:0000314"/>
    <property type="project" value="ComplexPortal"/>
</dbReference>
<dbReference type="GO" id="GO:0006261">
    <property type="term" value="P:DNA-templated DNA replication"/>
    <property type="evidence" value="ECO:0000314"/>
    <property type="project" value="FlyBase"/>
</dbReference>
<dbReference type="FunFam" id="3.60.21.60:FF:000004">
    <property type="entry name" value="DNA polymerase alpha subunit B"/>
    <property type="match status" value="1"/>
</dbReference>
<dbReference type="Gene3D" id="3.60.21.60">
    <property type="match status" value="2"/>
</dbReference>
<dbReference type="Gene3D" id="1.10.8.530">
    <property type="entry name" value="DNA polymerase alpha-primase, subunit B, N-terminal domain"/>
    <property type="match status" value="1"/>
</dbReference>
<dbReference type="InterPro" id="IPR007185">
    <property type="entry name" value="DNA_pol_a/d/e_bsu"/>
</dbReference>
<dbReference type="InterPro" id="IPR043034">
    <property type="entry name" value="DNA_pol_alpha_B_N_sf"/>
</dbReference>
<dbReference type="InterPro" id="IPR016722">
    <property type="entry name" value="DNA_pol_alpha_bsu"/>
</dbReference>
<dbReference type="InterPro" id="IPR054300">
    <property type="entry name" value="DPOA2_OB"/>
</dbReference>
<dbReference type="InterPro" id="IPR013627">
    <property type="entry name" value="Pol_alpha_B_N"/>
</dbReference>
<dbReference type="PANTHER" id="PTHR23061">
    <property type="entry name" value="DNA POLYMERASE 2 ALPHA 70 KDA SUBUNIT"/>
    <property type="match status" value="1"/>
</dbReference>
<dbReference type="PANTHER" id="PTHR23061:SF12">
    <property type="entry name" value="DNA POLYMERASE ALPHA SUBUNIT B"/>
    <property type="match status" value="1"/>
</dbReference>
<dbReference type="Pfam" id="PF04042">
    <property type="entry name" value="DNA_pol_E_B"/>
    <property type="match status" value="1"/>
</dbReference>
<dbReference type="Pfam" id="PF22062">
    <property type="entry name" value="DPOA2_OB"/>
    <property type="match status" value="1"/>
</dbReference>
<dbReference type="Pfam" id="PF08418">
    <property type="entry name" value="Pol_alpha_B_N"/>
    <property type="match status" value="1"/>
</dbReference>
<dbReference type="PIRSF" id="PIRSF018300">
    <property type="entry name" value="DNA_pol_alph_2"/>
    <property type="match status" value="1"/>
</dbReference>
<protein>
    <recommendedName>
        <fullName evidence="12">DNA polymerase alpha subunit B</fullName>
    </recommendedName>
    <alternativeName>
        <fullName>DNA polymerase alpha 73 kDa subunit</fullName>
    </alternativeName>
</protein>
<gene>
    <name evidence="15" type="primary">PolA2</name>
    <name evidence="15" type="synonym">DNApol-alpha73</name>
    <name evidence="15" type="ORF">CG5923</name>
</gene>
<name>DPOA2_DROME</name>
<organism>
    <name type="scientific">Drosophila melanogaster</name>
    <name type="common">Fruit fly</name>
    <dbReference type="NCBI Taxonomy" id="7227"/>
    <lineage>
        <taxon>Eukaryota</taxon>
        <taxon>Metazoa</taxon>
        <taxon>Ecdysozoa</taxon>
        <taxon>Arthropoda</taxon>
        <taxon>Hexapoda</taxon>
        <taxon>Insecta</taxon>
        <taxon>Pterygota</taxon>
        <taxon>Neoptera</taxon>
        <taxon>Endopterygota</taxon>
        <taxon>Diptera</taxon>
        <taxon>Brachycera</taxon>
        <taxon>Muscomorpha</taxon>
        <taxon>Ephydroidea</taxon>
        <taxon>Drosophilidae</taxon>
        <taxon>Drosophila</taxon>
        <taxon>Sophophora</taxon>
    </lineage>
</organism>
<reference evidence="13" key="1">
    <citation type="journal article" date="1992" name="Nucleic Acids Res.">
        <title>Cloning of the gene for the 73 kD subunit of the DNA polymerase alpha primase of Drosophila melanogaster.</title>
        <authorList>
            <person name="Cotterill S."/>
            <person name="Lehman I.R."/>
            <person name="McLachlan P."/>
        </authorList>
    </citation>
    <scope>NUCLEOTIDE SEQUENCE [GENOMIC DNA / MRNA]</scope>
</reference>
<reference key="2">
    <citation type="journal article" date="2000" name="Science">
        <title>The genome sequence of Drosophila melanogaster.</title>
        <authorList>
            <person name="Adams M.D."/>
            <person name="Celniker S.E."/>
            <person name="Holt R.A."/>
            <person name="Evans C.A."/>
            <person name="Gocayne J.D."/>
            <person name="Amanatides P.G."/>
            <person name="Scherer S.E."/>
            <person name="Li P.W."/>
            <person name="Hoskins R.A."/>
            <person name="Galle R.F."/>
            <person name="George R.A."/>
            <person name="Lewis S.E."/>
            <person name="Richards S."/>
            <person name="Ashburner M."/>
            <person name="Henderson S.N."/>
            <person name="Sutton G.G."/>
            <person name="Wortman J.R."/>
            <person name="Yandell M.D."/>
            <person name="Zhang Q."/>
            <person name="Chen L.X."/>
            <person name="Brandon R.C."/>
            <person name="Rogers Y.-H.C."/>
            <person name="Blazej R.G."/>
            <person name="Champe M."/>
            <person name="Pfeiffer B.D."/>
            <person name="Wan K.H."/>
            <person name="Doyle C."/>
            <person name="Baxter E.G."/>
            <person name="Helt G."/>
            <person name="Nelson C.R."/>
            <person name="Miklos G.L.G."/>
            <person name="Abril J.F."/>
            <person name="Agbayani A."/>
            <person name="An H.-J."/>
            <person name="Andrews-Pfannkoch C."/>
            <person name="Baldwin D."/>
            <person name="Ballew R.M."/>
            <person name="Basu A."/>
            <person name="Baxendale J."/>
            <person name="Bayraktaroglu L."/>
            <person name="Beasley E.M."/>
            <person name="Beeson K.Y."/>
            <person name="Benos P.V."/>
            <person name="Berman B.P."/>
            <person name="Bhandari D."/>
            <person name="Bolshakov S."/>
            <person name="Borkova D."/>
            <person name="Botchan M.R."/>
            <person name="Bouck J."/>
            <person name="Brokstein P."/>
            <person name="Brottier P."/>
            <person name="Burtis K.C."/>
            <person name="Busam D.A."/>
            <person name="Butler H."/>
            <person name="Cadieu E."/>
            <person name="Center A."/>
            <person name="Chandra I."/>
            <person name="Cherry J.M."/>
            <person name="Cawley S."/>
            <person name="Dahlke C."/>
            <person name="Davenport L.B."/>
            <person name="Davies P."/>
            <person name="de Pablos B."/>
            <person name="Delcher A."/>
            <person name="Deng Z."/>
            <person name="Mays A.D."/>
            <person name="Dew I."/>
            <person name="Dietz S.M."/>
            <person name="Dodson K."/>
            <person name="Doup L.E."/>
            <person name="Downes M."/>
            <person name="Dugan-Rocha S."/>
            <person name="Dunkov B.C."/>
            <person name="Dunn P."/>
            <person name="Durbin K.J."/>
            <person name="Evangelista C.C."/>
            <person name="Ferraz C."/>
            <person name="Ferriera S."/>
            <person name="Fleischmann W."/>
            <person name="Fosler C."/>
            <person name="Gabrielian A.E."/>
            <person name="Garg N.S."/>
            <person name="Gelbart W.M."/>
            <person name="Glasser K."/>
            <person name="Glodek A."/>
            <person name="Gong F."/>
            <person name="Gorrell J.H."/>
            <person name="Gu Z."/>
            <person name="Guan P."/>
            <person name="Harris M."/>
            <person name="Harris N.L."/>
            <person name="Harvey D.A."/>
            <person name="Heiman T.J."/>
            <person name="Hernandez J.R."/>
            <person name="Houck J."/>
            <person name="Hostin D."/>
            <person name="Houston K.A."/>
            <person name="Howland T.J."/>
            <person name="Wei M.-H."/>
            <person name="Ibegwam C."/>
            <person name="Jalali M."/>
            <person name="Kalush F."/>
            <person name="Karpen G.H."/>
            <person name="Ke Z."/>
            <person name="Kennison J.A."/>
            <person name="Ketchum K.A."/>
            <person name="Kimmel B.E."/>
            <person name="Kodira C.D."/>
            <person name="Kraft C.L."/>
            <person name="Kravitz S."/>
            <person name="Kulp D."/>
            <person name="Lai Z."/>
            <person name="Lasko P."/>
            <person name="Lei Y."/>
            <person name="Levitsky A.A."/>
            <person name="Li J.H."/>
            <person name="Li Z."/>
            <person name="Liang Y."/>
            <person name="Lin X."/>
            <person name="Liu X."/>
            <person name="Mattei B."/>
            <person name="McIntosh T.C."/>
            <person name="McLeod M.P."/>
            <person name="McPherson D."/>
            <person name="Merkulov G."/>
            <person name="Milshina N.V."/>
            <person name="Mobarry C."/>
            <person name="Morris J."/>
            <person name="Moshrefi A."/>
            <person name="Mount S.M."/>
            <person name="Moy M."/>
            <person name="Murphy B."/>
            <person name="Murphy L."/>
            <person name="Muzny D.M."/>
            <person name="Nelson D.L."/>
            <person name="Nelson D.R."/>
            <person name="Nelson K.A."/>
            <person name="Nixon K."/>
            <person name="Nusskern D.R."/>
            <person name="Pacleb J.M."/>
            <person name="Palazzolo M."/>
            <person name="Pittman G.S."/>
            <person name="Pan S."/>
            <person name="Pollard J."/>
            <person name="Puri V."/>
            <person name="Reese M.G."/>
            <person name="Reinert K."/>
            <person name="Remington K."/>
            <person name="Saunders R.D.C."/>
            <person name="Scheeler F."/>
            <person name="Shen H."/>
            <person name="Shue B.C."/>
            <person name="Siden-Kiamos I."/>
            <person name="Simpson M."/>
            <person name="Skupski M.P."/>
            <person name="Smith T.J."/>
            <person name="Spier E."/>
            <person name="Spradling A.C."/>
            <person name="Stapleton M."/>
            <person name="Strong R."/>
            <person name="Sun E."/>
            <person name="Svirskas R."/>
            <person name="Tector C."/>
            <person name="Turner R."/>
            <person name="Venter E."/>
            <person name="Wang A.H."/>
            <person name="Wang X."/>
            <person name="Wang Z.-Y."/>
            <person name="Wassarman D.A."/>
            <person name="Weinstock G.M."/>
            <person name="Weissenbach J."/>
            <person name="Williams S.M."/>
            <person name="Woodage T."/>
            <person name="Worley K.C."/>
            <person name="Wu D."/>
            <person name="Yang S."/>
            <person name="Yao Q.A."/>
            <person name="Ye J."/>
            <person name="Yeh R.-F."/>
            <person name="Zaveri J.S."/>
            <person name="Zhan M."/>
            <person name="Zhang G."/>
            <person name="Zhao Q."/>
            <person name="Zheng L."/>
            <person name="Zheng X.H."/>
            <person name="Zhong F.N."/>
            <person name="Zhong W."/>
            <person name="Zhou X."/>
            <person name="Zhu S.C."/>
            <person name="Zhu X."/>
            <person name="Smith H.O."/>
            <person name="Gibbs R.A."/>
            <person name="Myers E.W."/>
            <person name="Rubin G.M."/>
            <person name="Venter J.C."/>
        </authorList>
    </citation>
    <scope>NUCLEOTIDE SEQUENCE [LARGE SCALE GENOMIC DNA]</scope>
    <source>
        <strain evidence="4">Berkeley</strain>
    </source>
</reference>
<reference evidence="13" key="3">
    <citation type="journal article" date="2002" name="Genome Biol.">
        <title>Annotation of the Drosophila melanogaster euchromatic genome: a systematic review.</title>
        <authorList>
            <person name="Misra S."/>
            <person name="Crosby M.A."/>
            <person name="Mungall C.J."/>
            <person name="Matthews B.B."/>
            <person name="Campbell K.S."/>
            <person name="Hradecky P."/>
            <person name="Huang Y."/>
            <person name="Kaminker J.S."/>
            <person name="Millburn G.H."/>
            <person name="Prochnik S.E."/>
            <person name="Smith C.D."/>
            <person name="Tupy J.L."/>
            <person name="Whitfield E.J."/>
            <person name="Bayraktaroglu L."/>
            <person name="Berman B.P."/>
            <person name="Bettencourt B.R."/>
            <person name="Celniker S.E."/>
            <person name="de Grey A.D.N.J."/>
            <person name="Drysdale R.A."/>
            <person name="Harris N.L."/>
            <person name="Richter J."/>
            <person name="Russo S."/>
            <person name="Schroeder A.J."/>
            <person name="Shu S.Q."/>
            <person name="Stapleton M."/>
            <person name="Yamada C."/>
            <person name="Ashburner M."/>
            <person name="Gelbart W.M."/>
            <person name="Rubin G.M."/>
            <person name="Lewis S.E."/>
        </authorList>
    </citation>
    <scope>GENOME REANNOTATION</scope>
    <source>
        <strain>Berkeley</strain>
    </source>
</reference>
<reference evidence="13 14" key="4">
    <citation type="journal article" date="2002" name="Genome Biol.">
        <title>A Drosophila full-length cDNA resource.</title>
        <authorList>
            <person name="Stapleton M."/>
            <person name="Carlson J.W."/>
            <person name="Brokstein P."/>
            <person name="Yu C."/>
            <person name="Champe M."/>
            <person name="George R.A."/>
            <person name="Guarin H."/>
            <person name="Kronmiller B."/>
            <person name="Pacleb J.M."/>
            <person name="Park S."/>
            <person name="Wan K.H."/>
            <person name="Rubin G.M."/>
            <person name="Celniker S.E."/>
        </authorList>
    </citation>
    <scope>NUCLEOTIDE SEQUENCE [LARGE SCALE MRNA]</scope>
    <source>
        <strain evidence="5">Berkeley</strain>
        <tissue evidence="5">Ovary</tissue>
    </source>
</reference>
<reference key="5">
    <citation type="journal article" date="1980" name="J. Biol. Chem.">
        <title>DNA polymerase alpha from Drosophila melanogaster embryos. Subunit structure.</title>
        <authorList>
            <person name="Villani G."/>
            <person name="Sauer B."/>
            <person name="Lehman I.R."/>
        </authorList>
    </citation>
    <scope>FUNCTION</scope>
    <scope>IDENTIFICATION IN THE DNA POLYMERASE ALPHA COMPLEX</scope>
    <scope>TISSUE SPECIFICITY</scope>
</reference>
<reference key="6">
    <citation type="journal article" date="1983" name="Proc. Natl. Acad. Sci. U.S.A.">
        <title>Isolation of an intact DNA polymerase-primase from embryos of Drosophila melanogaster.</title>
        <authorList>
            <person name="Kaguni L.S."/>
            <person name="Rossignol J.M."/>
            <person name="Conaway R.C."/>
            <person name="Lehman I.R."/>
        </authorList>
    </citation>
    <scope>FUNCTION</scope>
    <scope>IDENTIFICATION IN THE DNA POLYMERASE ALPHA COMPLEX</scope>
    <scope>TISSUE SPECIFICITY</scope>
</reference>
<reference key="7">
    <citation type="journal article" date="1983" name="J. Biol. Chem.">
        <title>Association of DNA primase with the beta/gamma subunits of DNA polymerase alpha from Drosophila melanogaster embryos.</title>
        <authorList>
            <person name="Kaguni L.S."/>
            <person name="Rossignol J.M."/>
            <person name="Conaway R.C."/>
            <person name="Banks G.R."/>
            <person name="Lehman I.R."/>
        </authorList>
    </citation>
    <scope>FUNCTION</scope>
    <scope>IDENTIFICATION IN THE DNA POLYMERASE ALPHA COMPLEX</scope>
    <scope>TISSUE SPECIFICITY</scope>
</reference>
<reference key="8">
    <citation type="journal article" date="1995" name="J. Biochem.">
        <title>A 130 kDa polypeptide immunologically related to the 180 kDa catalytic subunit of DNA polymerase alpha-primase complex is detected in early embryos of Drosophila.</title>
        <authorList>
            <person name="Kuroda K."/>
            <person name="Ueda R."/>
        </authorList>
    </citation>
    <scope>FUNCTION</scope>
    <scope>SUBCELLULAR LOCATION</scope>
    <scope>TISSUE SPECIFICITY</scope>
</reference>
<reference key="9">
    <citation type="journal article" date="1999" name="Biochem. Biophys. Res. Commun.">
        <title>Phosphorylation and dephosphorylation of the B subunit of DNA polymerase alpha-primase complex in the early embryogenesis of Drosophila.</title>
        <authorList>
            <person name="Kuroda K."/>
            <person name="Ueda R."/>
        </authorList>
    </citation>
    <scope>TISSUE SPECIFICITY</scope>
    <scope>PHOSPHORYLATION</scope>
</reference>
<reference key="10">
    <citation type="journal article" date="2008" name="J. Proteome Res.">
        <title>Phosphoproteome analysis of Drosophila melanogaster embryos.</title>
        <authorList>
            <person name="Zhai B."/>
            <person name="Villen J."/>
            <person name="Beausoleil S.A."/>
            <person name="Mintseris J."/>
            <person name="Gygi S.P."/>
        </authorList>
    </citation>
    <scope>PHOSPHORYLATION [LARGE SCALE ANALYSIS] AT SER-155; THR-164; SER-166 AND SER-168</scope>
    <scope>IDENTIFICATION BY MASS SPECTROMETRY</scope>
    <source>
        <tissue>Embryo</tissue>
    </source>
</reference>
<proteinExistence type="evidence at protein level"/>
<feature type="chain" id="PRO_0000194039" description="DNA polymerase alpha subunit B">
    <location>
        <begin position="1"/>
        <end position="609"/>
    </location>
</feature>
<feature type="modified residue" description="Phosphoserine" evidence="6">
    <location>
        <position position="155"/>
    </location>
</feature>
<feature type="modified residue" description="Phosphothreonine" evidence="6">
    <location>
        <position position="164"/>
    </location>
</feature>
<feature type="modified residue" description="Phosphoserine" evidence="6">
    <location>
        <position position="166"/>
    </location>
</feature>
<feature type="modified residue" description="Phosphoserine" evidence="6">
    <location>
        <position position="168"/>
    </location>
</feature>
<feature type="sequence conflict" description="In Ref. 1; no nucleotide entry." evidence="13" ref="1">
    <original>KDKAGYKATGQKAKSYG</original>
    <variation>RTRRDTRQLARRRNHMS</variation>
    <location>
        <begin position="73"/>
        <end position="89"/>
    </location>
</feature>
<feature type="sequence conflict" description="In Ref. 1; no nucleotide entry." evidence="13" ref="1">
    <original>SGPFTDSTDLFYEPLHDLLKYLKDHRPDVLVLTGPFLDADHKM</original>
    <variation>PDPLRTVRISSTNRCTTCSSTSRITDLTCWCSRDHSWMPITRL</variation>
    <location>
        <begin position="366"/>
        <end position="408"/>
    </location>
</feature>
<feature type="sequence conflict" description="In Ref. 4; AAL28491." evidence="13" ref="4">
    <original>A</original>
    <variation>S</variation>
    <location>
        <position position="458"/>
    </location>
</feature>
<feature type="sequence conflict" description="In Ref. 4; AAL28491." evidence="13" ref="4">
    <original>F</original>
    <variation>L</variation>
    <location>
        <position position="480"/>
    </location>
</feature>
<feature type="sequence conflict" description="In Ref. 4; AAL28491." evidence="13" ref="4">
    <original>A</original>
    <variation>V</variation>
    <location>
        <position position="509"/>
    </location>
</feature>
<feature type="sequence conflict" description="In Ref. 1; no nucleotide entry." evidence="13" ref="1">
    <original>I</original>
    <variation>T</variation>
    <location>
        <position position="510"/>
    </location>
</feature>
<accession>Q9VB62</accession>
<accession>Q95S59</accession>
<accession>Q9TXB0</accession>
<evidence type="ECO:0000250" key="1">
    <source>
        <dbReference type="UniProtKB" id="P09884"/>
    </source>
</evidence>
<evidence type="ECO:0000250" key="2">
    <source>
        <dbReference type="UniProtKB" id="P20664"/>
    </source>
</evidence>
<evidence type="ECO:0000255" key="3"/>
<evidence type="ECO:0000269" key="4">
    <source>
    </source>
</evidence>
<evidence type="ECO:0000269" key="5">
    <source>
    </source>
</evidence>
<evidence type="ECO:0000269" key="6">
    <source>
    </source>
</evidence>
<evidence type="ECO:0000269" key="7">
    <source>
    </source>
</evidence>
<evidence type="ECO:0000269" key="8">
    <source>
    </source>
</evidence>
<evidence type="ECO:0000269" key="9">
    <source>
    </source>
</evidence>
<evidence type="ECO:0000269" key="10">
    <source>
    </source>
</evidence>
<evidence type="ECO:0000269" key="11">
    <source>
    </source>
</evidence>
<evidence type="ECO:0000303" key="12">
    <source>
    </source>
</evidence>
<evidence type="ECO:0000305" key="13"/>
<evidence type="ECO:0000312" key="14">
    <source>
        <dbReference type="EMBL" id="AAL28491.1"/>
    </source>
</evidence>
<evidence type="ECO:0000312" key="15">
    <source>
        <dbReference type="FlyBase" id="FBgn0005696"/>
    </source>
</evidence>
<keyword id="KW-0235">DNA replication</keyword>
<keyword id="KW-0539">Nucleus</keyword>
<keyword id="KW-0597">Phosphoprotein</keyword>
<keyword id="KW-1185">Reference proteome</keyword>
<comment type="function">
    <text evidence="1 2 7 8 9 10">Accessory subunit of the DNA polymerase alpha complex (also known as the alpha DNA polymerase-primase complex) which plays an essential role in the initiation of DNA synthesis (PubMed:6403945, PubMed:6409898, PubMed:6773966, PubMed:7592543). During the S phase of the cell cycle, the DNA polymerase alpha complex (composed of a catalytic subunit PolA1, an accessory subunit PolA2 and two primase subunits, the catalytic subunit Prim1 and the regulatory subunit Prim2) is recruited to DNA at the replicative forks (By similarity). The primase subunit of the polymerase alpha complex initiates DNA synthesis by oligomerising short RNA primers on both leading and lagging strands. These primers are initially extended by the polymerase alpha catalytic subunit and subsequently transferred to polymerase delta and polymerase epsilon for processive synthesis on the lagging and leading strand, respectively (By similarity).</text>
</comment>
<comment type="subunit">
    <text evidence="7 8 9">Component of the alpha DNA polymerase complex (also known as the alpha DNA polymerase-primase complex) consisting of four subunits: the catalytic subunit PolA1, the regulatory subunit PolA2, and the primase complex subunits Prim1 and Prim2 respectively (PubMed:6403945, PubMed:6409898, PubMed:6773966). PolA1 associates with the DNA primase complex before association with PolA2 (PubMed:6409898).</text>
</comment>
<comment type="subcellular location">
    <subcellularLocation>
        <location evidence="10">Nucleus</location>
    </subcellularLocation>
</comment>
<comment type="tissue specificity">
    <text evidence="7 8 9 10 11">Expressed in embryos (at protein level).</text>
</comment>
<comment type="PTM">
    <text evidence="11">Phosphorylated in embryos until cycle 13.</text>
</comment>
<comment type="similarity">
    <text evidence="3">Belongs to the DNA polymerase alpha subunit B family.</text>
</comment>